<name>PAFA_ACIFD</name>
<protein>
    <recommendedName>
        <fullName evidence="1">Pup--protein ligase</fullName>
        <ecNumber evidence="1">6.3.1.19</ecNumber>
    </recommendedName>
    <alternativeName>
        <fullName evidence="1">Proteasome accessory factor A</fullName>
    </alternativeName>
    <alternativeName>
        <fullName evidence="1">Pup-conjugating enzyme</fullName>
    </alternativeName>
</protein>
<sequence>MPRLARRIYGIENEYGITCTQRGQRRLSPDEVARYLFRRVVSWGRSSNVFLENGARLYLDVGSHPEYATPECDSLSDLVAHDKAGERILESLAHSAEAKMREEGIRGDVFLLKNNTDSAGNSYGCHENYLTVRVDDLTRLVEVLIPFLVSRQIIAGAGKVLLTSRGPLYAVSQRAEHIWEGVSSATTRSRPIINTRDEPHADAERYRRLHVIVGDSNMSQWATYLKVGAMAIVLRLLEEEVVLRDLTLENPIRAIREIAHDTELERTVRLVNGRELTGLEIQEAYFERAERYHERIGLPADEARALDMWREALKALRANDHEALFGKVDWVTKLTLIEAFRARHQLPLSHPQVSLLDLQYHDISRERGLFARLEAKGRVPRIVDDETIERAVDEPPATTRAALRGRFIRAAKEAHRDYTVDWVHLKLNDQAQRTVMLKDPFASEDERVDRLLTSI</sequence>
<proteinExistence type="inferred from homology"/>
<evidence type="ECO:0000255" key="1">
    <source>
        <dbReference type="HAMAP-Rule" id="MF_02111"/>
    </source>
</evidence>
<dbReference type="EC" id="6.3.1.19" evidence="1"/>
<dbReference type="EMBL" id="CP001631">
    <property type="protein sequence ID" value="ACU53857.1"/>
    <property type="molecule type" value="Genomic_DNA"/>
</dbReference>
<dbReference type="RefSeq" id="WP_015798346.1">
    <property type="nucleotide sequence ID" value="NC_013124.1"/>
</dbReference>
<dbReference type="SMR" id="C7LYP9"/>
<dbReference type="STRING" id="525909.Afer_0912"/>
<dbReference type="KEGG" id="afo:Afer_0912"/>
<dbReference type="eggNOG" id="COG0638">
    <property type="taxonomic scope" value="Bacteria"/>
</dbReference>
<dbReference type="HOGENOM" id="CLU_040524_0_1_11"/>
<dbReference type="UniPathway" id="UPA00997"/>
<dbReference type="UniPathway" id="UPA00998"/>
<dbReference type="Proteomes" id="UP000000771">
    <property type="component" value="Chromosome"/>
</dbReference>
<dbReference type="GO" id="GO:0005524">
    <property type="term" value="F:ATP binding"/>
    <property type="evidence" value="ECO:0007669"/>
    <property type="project" value="UniProtKB-UniRule"/>
</dbReference>
<dbReference type="GO" id="GO:0016879">
    <property type="term" value="F:ligase activity, forming carbon-nitrogen bonds"/>
    <property type="evidence" value="ECO:0007669"/>
    <property type="project" value="InterPro"/>
</dbReference>
<dbReference type="GO" id="GO:0000287">
    <property type="term" value="F:magnesium ion binding"/>
    <property type="evidence" value="ECO:0007669"/>
    <property type="project" value="UniProtKB-UniRule"/>
</dbReference>
<dbReference type="GO" id="GO:0019787">
    <property type="term" value="F:ubiquitin-like protein transferase activity"/>
    <property type="evidence" value="ECO:0007669"/>
    <property type="project" value="UniProtKB-UniRule"/>
</dbReference>
<dbReference type="GO" id="GO:0019941">
    <property type="term" value="P:modification-dependent protein catabolic process"/>
    <property type="evidence" value="ECO:0007669"/>
    <property type="project" value="UniProtKB-UniRule"/>
</dbReference>
<dbReference type="GO" id="GO:0010498">
    <property type="term" value="P:proteasomal protein catabolic process"/>
    <property type="evidence" value="ECO:0007669"/>
    <property type="project" value="UniProtKB-UniRule"/>
</dbReference>
<dbReference type="GO" id="GO:0070490">
    <property type="term" value="P:protein pupylation"/>
    <property type="evidence" value="ECO:0007669"/>
    <property type="project" value="UniProtKB-UniRule"/>
</dbReference>
<dbReference type="HAMAP" id="MF_02111">
    <property type="entry name" value="Pup_ligase"/>
    <property type="match status" value="1"/>
</dbReference>
<dbReference type="InterPro" id="IPR022279">
    <property type="entry name" value="Pup_ligase"/>
</dbReference>
<dbReference type="InterPro" id="IPR004347">
    <property type="entry name" value="Pup_ligase/deamidase"/>
</dbReference>
<dbReference type="NCBIfam" id="TIGR03686">
    <property type="entry name" value="pupylate_PafA"/>
    <property type="match status" value="1"/>
</dbReference>
<dbReference type="PANTHER" id="PTHR42307">
    <property type="entry name" value="PUP DEAMIDASE/DEPUPYLASE"/>
    <property type="match status" value="1"/>
</dbReference>
<dbReference type="PANTHER" id="PTHR42307:SF3">
    <property type="entry name" value="PUP--PROTEIN LIGASE"/>
    <property type="match status" value="1"/>
</dbReference>
<dbReference type="Pfam" id="PF03136">
    <property type="entry name" value="Pup_ligase"/>
    <property type="match status" value="1"/>
</dbReference>
<dbReference type="PIRSF" id="PIRSF018077">
    <property type="entry name" value="UCP018077"/>
    <property type="match status" value="1"/>
</dbReference>
<organism>
    <name type="scientific">Acidimicrobium ferrooxidans (strain DSM 10331 / JCM 15462 / NBRC 103882 / ICP)</name>
    <dbReference type="NCBI Taxonomy" id="525909"/>
    <lineage>
        <taxon>Bacteria</taxon>
        <taxon>Bacillati</taxon>
        <taxon>Actinomycetota</taxon>
        <taxon>Acidimicrobiia</taxon>
        <taxon>Acidimicrobiales</taxon>
        <taxon>Acidimicrobiaceae</taxon>
        <taxon>Acidimicrobium</taxon>
    </lineage>
</organism>
<comment type="function">
    <text evidence="1">Catalyzes the covalent attachment of the prokaryotic ubiquitin-like protein modifier Pup to the proteasomal substrate proteins, thereby targeting them for proteasomal degradation. This tagging system is termed pupylation. The ligation reaction involves the side-chain carboxylate of the C-terminal glutamate of Pup and the side-chain amino group of a substrate lysine.</text>
</comment>
<comment type="catalytic activity">
    <reaction evidence="1">
        <text>ATP + [prokaryotic ubiquitin-like protein]-L-glutamate + [protein]-L-lysine = ADP + phosphate + N(6)-([prokaryotic ubiquitin-like protein]-gamma-L-glutamyl)-[protein]-L-lysine.</text>
        <dbReference type="EC" id="6.3.1.19"/>
    </reaction>
</comment>
<comment type="pathway">
    <text evidence="1">Protein degradation; proteasomal Pup-dependent pathway.</text>
</comment>
<comment type="pathway">
    <text evidence="1">Protein modification; protein pupylation.</text>
</comment>
<comment type="miscellaneous">
    <text evidence="1">The reaction mechanism probably proceeds via the activation of Pup by phosphorylation of its C-terminal glutamate, which is then subject to nucleophilic attack by the substrate lysine, resulting in an isopeptide bond and the release of phosphate as a good leaving group.</text>
</comment>
<comment type="similarity">
    <text evidence="1">Belongs to the Pup ligase/Pup deamidase family. Pup-conjugating enzyme subfamily.</text>
</comment>
<accession>C7LYP9</accession>
<feature type="chain" id="PRO_0000395889" description="Pup--protein ligase">
    <location>
        <begin position="1"/>
        <end position="455"/>
    </location>
</feature>
<feature type="active site" description="Proton acceptor" evidence="1">
    <location>
        <position position="60"/>
    </location>
</feature>
<feature type="binding site" evidence="1">
    <location>
        <position position="12"/>
    </location>
    <ligand>
        <name>Mg(2+)</name>
        <dbReference type="ChEBI" id="CHEBI:18420"/>
    </ligand>
</feature>
<feature type="binding site" evidence="1">
    <location>
        <position position="56"/>
    </location>
    <ligand>
        <name>ATP</name>
        <dbReference type="ChEBI" id="CHEBI:30616"/>
    </ligand>
</feature>
<feature type="binding site" evidence="1">
    <location>
        <position position="58"/>
    </location>
    <ligand>
        <name>Mg(2+)</name>
        <dbReference type="ChEBI" id="CHEBI:18420"/>
    </ligand>
</feature>
<feature type="binding site" evidence="1">
    <location>
        <position position="66"/>
    </location>
    <ligand>
        <name>Mg(2+)</name>
        <dbReference type="ChEBI" id="CHEBI:18420"/>
    </ligand>
</feature>
<feature type="binding site" evidence="1">
    <location>
        <position position="69"/>
    </location>
    <ligand>
        <name>ATP</name>
        <dbReference type="ChEBI" id="CHEBI:30616"/>
    </ligand>
</feature>
<feature type="binding site" evidence="1">
    <location>
        <position position="422"/>
    </location>
    <ligand>
        <name>ATP</name>
        <dbReference type="ChEBI" id="CHEBI:30616"/>
    </ligand>
</feature>
<reference key="1">
    <citation type="journal article" date="2009" name="Stand. Genomic Sci.">
        <title>Complete genome sequence of Acidimicrobium ferrooxidans type strain (ICP).</title>
        <authorList>
            <person name="Clum A."/>
            <person name="Nolan M."/>
            <person name="Lang E."/>
            <person name="Glavina Del Rio T."/>
            <person name="Tice H."/>
            <person name="Copeland A."/>
            <person name="Cheng J.F."/>
            <person name="Lucas S."/>
            <person name="Chen F."/>
            <person name="Bruce D."/>
            <person name="Goodwin L."/>
            <person name="Pitluck S."/>
            <person name="Ivanova N."/>
            <person name="Mavrommatis K."/>
            <person name="Mikhailova N."/>
            <person name="Pati A."/>
            <person name="Chen A."/>
            <person name="Palaniappan K."/>
            <person name="Goker M."/>
            <person name="Spring S."/>
            <person name="Land M."/>
            <person name="Hauser L."/>
            <person name="Chang Y.J."/>
            <person name="Jeffries C.C."/>
            <person name="Chain P."/>
            <person name="Bristow J."/>
            <person name="Eisen J.A."/>
            <person name="Markowitz V."/>
            <person name="Hugenholtz P."/>
            <person name="Kyrpides N.C."/>
            <person name="Klenk H.P."/>
            <person name="Lapidus A."/>
        </authorList>
    </citation>
    <scope>NUCLEOTIDE SEQUENCE [LARGE SCALE GENOMIC DNA]</scope>
    <source>
        <strain>DSM 10331 / JCM 15462 / NBRC 103882 / ICP</strain>
    </source>
</reference>
<gene>
    <name evidence="1" type="primary">pafA</name>
    <name type="ordered locus">Afer_0912</name>
</gene>
<keyword id="KW-0067">ATP-binding</keyword>
<keyword id="KW-0436">Ligase</keyword>
<keyword id="KW-0460">Magnesium</keyword>
<keyword id="KW-0479">Metal-binding</keyword>
<keyword id="KW-0547">Nucleotide-binding</keyword>
<keyword id="KW-1185">Reference proteome</keyword>
<keyword id="KW-0833">Ubl conjugation pathway</keyword>